<keyword id="KW-0238">DNA-binding</keyword>
<keyword id="KW-1017">Isopeptide bond</keyword>
<keyword id="KW-0479">Metal-binding</keyword>
<keyword id="KW-0539">Nucleus</keyword>
<keyword id="KW-0597">Phosphoprotein</keyword>
<keyword id="KW-1185">Reference proteome</keyword>
<keyword id="KW-0677">Repeat</keyword>
<keyword id="KW-0804">Transcription</keyword>
<keyword id="KW-0805">Transcription regulation</keyword>
<keyword id="KW-0832">Ubl conjugation</keyword>
<keyword id="KW-0862">Zinc</keyword>
<keyword id="KW-0863">Zinc-finger</keyword>
<protein>
    <recommendedName>
        <fullName>Zinc finger protein 394</fullName>
    </recommendedName>
</protein>
<feature type="chain" id="PRO_0000047559" description="Zinc finger protein 394">
    <location>
        <begin position="1"/>
        <end position="574"/>
    </location>
</feature>
<feature type="domain" description="SCAN box" evidence="4">
    <location>
        <begin position="64"/>
        <end position="146"/>
    </location>
</feature>
<feature type="domain" description="KRAB" evidence="3">
    <location>
        <begin position="155"/>
        <end position="230"/>
    </location>
</feature>
<feature type="zinc finger region" description="C2H2-type 1" evidence="2">
    <location>
        <begin position="358"/>
        <end position="380"/>
    </location>
</feature>
<feature type="zinc finger region" description="C2H2-type 2" evidence="2">
    <location>
        <begin position="386"/>
        <end position="408"/>
    </location>
</feature>
<feature type="zinc finger region" description="C2H2-type 3" evidence="2">
    <location>
        <begin position="414"/>
        <end position="436"/>
    </location>
</feature>
<feature type="zinc finger region" description="C2H2-type 4" evidence="2">
    <location>
        <begin position="442"/>
        <end position="463"/>
    </location>
</feature>
<feature type="zinc finger region" description="C2H2-type 5" evidence="2">
    <location>
        <begin position="469"/>
        <end position="491"/>
    </location>
</feature>
<feature type="zinc finger region" description="C2H2-type 6" evidence="2">
    <location>
        <begin position="497"/>
        <end position="519"/>
    </location>
</feature>
<feature type="zinc finger region" description="C2H2-type 7" evidence="2">
    <location>
        <begin position="525"/>
        <end position="547"/>
    </location>
</feature>
<feature type="region of interest" description="Disordered" evidence="5">
    <location>
        <begin position="182"/>
        <end position="202"/>
    </location>
</feature>
<feature type="region of interest" description="Disordered" evidence="5">
    <location>
        <begin position="231"/>
        <end position="284"/>
    </location>
</feature>
<feature type="compositionally biased region" description="Polar residues" evidence="5">
    <location>
        <begin position="265"/>
        <end position="274"/>
    </location>
</feature>
<feature type="modified residue" description="Phosphoserine" evidence="1">
    <location>
        <position position="12"/>
    </location>
</feature>
<feature type="cross-link" description="Glycyl lysine isopeptide (Lys-Gly) (interchain with G-Cter in SUMO2)" evidence="1">
    <location>
        <position position="40"/>
    </location>
</feature>
<feature type="cross-link" description="Glycyl lysine isopeptide (Lys-Gly) (interchain with G-Cter in SUMO2)" evidence="1">
    <location>
        <position position="203"/>
    </location>
</feature>
<feature type="cross-link" description="Glycyl lysine isopeptide (Lys-Gly) (interchain with G-Cter in SUMO2)" evidence="1">
    <location>
        <position position="228"/>
    </location>
</feature>
<feature type="cross-link" description="Glycyl lysine isopeptide (Lys-Gly) (interchain with G-Cter in SUMO2)" evidence="1">
    <location>
        <position position="254"/>
    </location>
</feature>
<feature type="cross-link" description="Glycyl lysine isopeptide (Lys-Gly) (interchain with G-Cter in SUMO2)" evidence="1">
    <location>
        <position position="282"/>
    </location>
</feature>
<feature type="cross-link" description="Glycyl lysine isopeptide (Lys-Gly) (interchain with G-Cter in SUMO2)" evidence="1">
    <location>
        <position position="443"/>
    </location>
</feature>
<reference key="1">
    <citation type="submission" date="2004-11" db="EMBL/GenBank/DDBJ databases">
        <authorList>
            <consortium name="The German cDNA consortium"/>
        </authorList>
    </citation>
    <scope>NUCLEOTIDE SEQUENCE [LARGE SCALE MRNA]</scope>
    <source>
        <tissue>Brain cortex</tissue>
    </source>
</reference>
<comment type="function">
    <text>May be involved in transcriptional regulation.</text>
</comment>
<comment type="subcellular location">
    <subcellularLocation>
        <location evidence="4">Nucleus</location>
    </subcellularLocation>
</comment>
<comment type="similarity">
    <text evidence="6">Belongs to the krueppel C2H2-type zinc-finger protein family.</text>
</comment>
<gene>
    <name type="primary">ZNF394</name>
</gene>
<evidence type="ECO:0000250" key="1">
    <source>
        <dbReference type="UniProtKB" id="Q53GI3"/>
    </source>
</evidence>
<evidence type="ECO:0000255" key="2">
    <source>
        <dbReference type="PROSITE-ProRule" id="PRU00042"/>
    </source>
</evidence>
<evidence type="ECO:0000255" key="3">
    <source>
        <dbReference type="PROSITE-ProRule" id="PRU00119"/>
    </source>
</evidence>
<evidence type="ECO:0000255" key="4">
    <source>
        <dbReference type="PROSITE-ProRule" id="PRU00187"/>
    </source>
</evidence>
<evidence type="ECO:0000256" key="5">
    <source>
        <dbReference type="SAM" id="MobiDB-lite"/>
    </source>
</evidence>
<evidence type="ECO:0000305" key="6"/>
<organism>
    <name type="scientific">Pongo abelii</name>
    <name type="common">Sumatran orangutan</name>
    <name type="synonym">Pongo pygmaeus abelii</name>
    <dbReference type="NCBI Taxonomy" id="9601"/>
    <lineage>
        <taxon>Eukaryota</taxon>
        <taxon>Metazoa</taxon>
        <taxon>Chordata</taxon>
        <taxon>Craniata</taxon>
        <taxon>Vertebrata</taxon>
        <taxon>Euteleostomi</taxon>
        <taxon>Mammalia</taxon>
        <taxon>Eutheria</taxon>
        <taxon>Euarchontoglires</taxon>
        <taxon>Primates</taxon>
        <taxon>Haplorrhini</taxon>
        <taxon>Catarrhini</taxon>
        <taxon>Hominidae</taxon>
        <taxon>Pongo</taxon>
    </lineage>
</organism>
<accession>Q5R741</accession>
<sequence length="574" mass="65748">MNSSLTVQRRGSDAELGPWVMAARSKDAALSQRDGVLPVKVEEDSPGSWEPSYPAAWPDPETSRLHFRQLRYQEVAGPEEALSRLRELCRRWLRPELLSKEQILELLVLEQFLTILPEELQAWVREHCPESGEEAVAVVRALQRALDGTSPQGMVTFEDMAVSLTWEEWERLDPARRDFCRESAQKDSGSTVPPSLESRVENKELIPMQQILEEVEPQGQLQEAFQGKHPLFSKCGSTHEDRVEKQSGNPLPLKLENSAEAEGLNSISDVNKNGSIEGEDSKNNELQNSARCSNLVLCQHIPKAERPTDGEEHGNKCKQSFHMVAWHVLKPHKSDSGDSFHHSSFFETQRQLHEERPYKCGNCGKSFKQRSDLFRHQRIHTGEKPYGCQECGKSFSQSAALTKHQRTHTGEKPYTCLKCGERFRQNSHLNRHQSTHSRDKHFKCEECGETCRISNLFRHQRLHKGERPYKCEECKKSFKQRSDLFKHHRIHTGEKPYGCSVCGKRFNQSATLIKHQRIHTGEKPYKCLECGERFRQSTHLIRHQRIHQNKMLSVGRGAHACNPSPLGGQGRRII</sequence>
<dbReference type="EMBL" id="CR860277">
    <property type="protein sequence ID" value="CAH92419.1"/>
    <property type="molecule type" value="mRNA"/>
</dbReference>
<dbReference type="RefSeq" id="NP_001126426.1">
    <property type="nucleotide sequence ID" value="NM_001132954.1"/>
</dbReference>
<dbReference type="SMR" id="Q5R741"/>
<dbReference type="FunCoup" id="Q5R741">
    <property type="interactions" value="177"/>
</dbReference>
<dbReference type="STRING" id="9601.ENSPPYP00000019477"/>
<dbReference type="GeneID" id="100173409"/>
<dbReference type="KEGG" id="pon:100173409"/>
<dbReference type="CTD" id="84124"/>
<dbReference type="eggNOG" id="KOG1721">
    <property type="taxonomic scope" value="Eukaryota"/>
</dbReference>
<dbReference type="InParanoid" id="Q5R741"/>
<dbReference type="OrthoDB" id="6077919at2759"/>
<dbReference type="Proteomes" id="UP000001595">
    <property type="component" value="Unplaced"/>
</dbReference>
<dbReference type="GO" id="GO:0005634">
    <property type="term" value="C:nucleus"/>
    <property type="evidence" value="ECO:0007669"/>
    <property type="project" value="UniProtKB-SubCell"/>
</dbReference>
<dbReference type="GO" id="GO:0000981">
    <property type="term" value="F:DNA-binding transcription factor activity, RNA polymerase II-specific"/>
    <property type="evidence" value="ECO:0007669"/>
    <property type="project" value="TreeGrafter"/>
</dbReference>
<dbReference type="GO" id="GO:0000978">
    <property type="term" value="F:RNA polymerase II cis-regulatory region sequence-specific DNA binding"/>
    <property type="evidence" value="ECO:0007669"/>
    <property type="project" value="TreeGrafter"/>
</dbReference>
<dbReference type="GO" id="GO:0008270">
    <property type="term" value="F:zinc ion binding"/>
    <property type="evidence" value="ECO:0007669"/>
    <property type="project" value="UniProtKB-KW"/>
</dbReference>
<dbReference type="CDD" id="cd07765">
    <property type="entry name" value="KRAB_A-box"/>
    <property type="match status" value="1"/>
</dbReference>
<dbReference type="CDD" id="cd07936">
    <property type="entry name" value="SCAN"/>
    <property type="match status" value="1"/>
</dbReference>
<dbReference type="FunFam" id="3.30.160.60:FF:000250">
    <property type="entry name" value="zinc finger protein 197 isoform X1"/>
    <property type="match status" value="2"/>
</dbReference>
<dbReference type="FunFam" id="3.30.160.60:FF:000512">
    <property type="entry name" value="zinc finger protein 197 isoform X1"/>
    <property type="match status" value="1"/>
</dbReference>
<dbReference type="FunFam" id="1.10.4020.10:FF:000001">
    <property type="entry name" value="zinc finger protein 263 isoform X1"/>
    <property type="match status" value="1"/>
</dbReference>
<dbReference type="FunFam" id="3.30.160.60:FF:002343">
    <property type="entry name" value="Zinc finger protein 33A"/>
    <property type="match status" value="1"/>
</dbReference>
<dbReference type="FunFam" id="3.30.160.60:FF:001234">
    <property type="entry name" value="Zinc finger protein 394"/>
    <property type="match status" value="2"/>
</dbReference>
<dbReference type="Gene3D" id="6.10.140.140">
    <property type="match status" value="1"/>
</dbReference>
<dbReference type="Gene3D" id="3.30.160.60">
    <property type="entry name" value="Classic Zinc Finger"/>
    <property type="match status" value="7"/>
</dbReference>
<dbReference type="Gene3D" id="1.10.4020.10">
    <property type="entry name" value="DNA breaking-rejoining enzymes"/>
    <property type="match status" value="1"/>
</dbReference>
<dbReference type="InterPro" id="IPR001909">
    <property type="entry name" value="KRAB"/>
</dbReference>
<dbReference type="InterPro" id="IPR036051">
    <property type="entry name" value="KRAB_dom_sf"/>
</dbReference>
<dbReference type="InterPro" id="IPR003309">
    <property type="entry name" value="SCAN_dom"/>
</dbReference>
<dbReference type="InterPro" id="IPR038269">
    <property type="entry name" value="SCAN_sf"/>
</dbReference>
<dbReference type="InterPro" id="IPR036236">
    <property type="entry name" value="Znf_C2H2_sf"/>
</dbReference>
<dbReference type="InterPro" id="IPR013087">
    <property type="entry name" value="Znf_C2H2_type"/>
</dbReference>
<dbReference type="PANTHER" id="PTHR23235:SF178">
    <property type="entry name" value="C2H2-TYPE DOMAIN-CONTAINING PROTEIN-RELATED"/>
    <property type="match status" value="1"/>
</dbReference>
<dbReference type="PANTHER" id="PTHR23235">
    <property type="entry name" value="KRUEPPEL-LIKE TRANSCRIPTION FACTOR"/>
    <property type="match status" value="1"/>
</dbReference>
<dbReference type="Pfam" id="PF01352">
    <property type="entry name" value="KRAB"/>
    <property type="match status" value="1"/>
</dbReference>
<dbReference type="Pfam" id="PF02023">
    <property type="entry name" value="SCAN"/>
    <property type="match status" value="1"/>
</dbReference>
<dbReference type="Pfam" id="PF00096">
    <property type="entry name" value="zf-C2H2"/>
    <property type="match status" value="7"/>
</dbReference>
<dbReference type="SMART" id="SM00349">
    <property type="entry name" value="KRAB"/>
    <property type="match status" value="1"/>
</dbReference>
<dbReference type="SMART" id="SM00431">
    <property type="entry name" value="SCAN"/>
    <property type="match status" value="1"/>
</dbReference>
<dbReference type="SMART" id="SM00355">
    <property type="entry name" value="ZnF_C2H2"/>
    <property type="match status" value="7"/>
</dbReference>
<dbReference type="SUPFAM" id="SSF57667">
    <property type="entry name" value="beta-beta-alpha zinc fingers"/>
    <property type="match status" value="4"/>
</dbReference>
<dbReference type="SUPFAM" id="SSF109640">
    <property type="entry name" value="KRAB domain (Kruppel-associated box)"/>
    <property type="match status" value="1"/>
</dbReference>
<dbReference type="SUPFAM" id="SSF47353">
    <property type="entry name" value="Retrovirus capsid dimerization domain-like"/>
    <property type="match status" value="1"/>
</dbReference>
<dbReference type="PROSITE" id="PS50805">
    <property type="entry name" value="KRAB"/>
    <property type="match status" value="1"/>
</dbReference>
<dbReference type="PROSITE" id="PS50804">
    <property type="entry name" value="SCAN_BOX"/>
    <property type="match status" value="1"/>
</dbReference>
<dbReference type="PROSITE" id="PS00028">
    <property type="entry name" value="ZINC_FINGER_C2H2_1"/>
    <property type="match status" value="6"/>
</dbReference>
<dbReference type="PROSITE" id="PS50157">
    <property type="entry name" value="ZINC_FINGER_C2H2_2"/>
    <property type="match status" value="7"/>
</dbReference>
<name>ZN394_PONAB</name>
<proteinExistence type="evidence at transcript level"/>